<gene>
    <name evidence="1" type="primary">rplO</name>
    <name type="ordered locus">PP_0473</name>
</gene>
<evidence type="ECO:0000255" key="1">
    <source>
        <dbReference type="HAMAP-Rule" id="MF_01341"/>
    </source>
</evidence>
<evidence type="ECO:0000256" key="2">
    <source>
        <dbReference type="SAM" id="MobiDB-lite"/>
    </source>
</evidence>
<evidence type="ECO:0000305" key="3"/>
<feature type="chain" id="PRO_0000104784" description="Large ribosomal subunit protein uL15">
    <location>
        <begin position="1"/>
        <end position="144"/>
    </location>
</feature>
<feature type="region of interest" description="Disordered" evidence="2">
    <location>
        <begin position="1"/>
        <end position="57"/>
    </location>
</feature>
<feature type="compositionally biased region" description="Gly residues" evidence="2">
    <location>
        <begin position="21"/>
        <end position="31"/>
    </location>
</feature>
<comment type="function">
    <text evidence="1">Binds to the 23S rRNA.</text>
</comment>
<comment type="subunit">
    <text evidence="1">Part of the 50S ribosomal subunit.</text>
</comment>
<comment type="similarity">
    <text evidence="1">Belongs to the universal ribosomal protein uL15 family.</text>
</comment>
<organism>
    <name type="scientific">Pseudomonas putida (strain ATCC 47054 / DSM 6125 / CFBP 8728 / NCIMB 11950 / KT2440)</name>
    <dbReference type="NCBI Taxonomy" id="160488"/>
    <lineage>
        <taxon>Bacteria</taxon>
        <taxon>Pseudomonadati</taxon>
        <taxon>Pseudomonadota</taxon>
        <taxon>Gammaproteobacteria</taxon>
        <taxon>Pseudomonadales</taxon>
        <taxon>Pseudomonadaceae</taxon>
        <taxon>Pseudomonas</taxon>
    </lineage>
</organism>
<sequence>MKLNDLSPAPGSRREKHRPGRGIGSGLGKTGGRGHKGQTSRSGGSIAPGFEGGQQPLHRRLPKFGFVSLKAMDRAEVRLSELAKVEGDVISVQSLKDANVINQHIQRVKIMLSGEVTRAVTIKGIAATKGARAAIEAAGGKFEE</sequence>
<accession>Q88QL6</accession>
<dbReference type="EMBL" id="AE015451">
    <property type="protein sequence ID" value="AAN66103.1"/>
    <property type="molecule type" value="Genomic_DNA"/>
</dbReference>
<dbReference type="RefSeq" id="NP_742639.1">
    <property type="nucleotide sequence ID" value="NC_002947.4"/>
</dbReference>
<dbReference type="RefSeq" id="WP_003255461.1">
    <property type="nucleotide sequence ID" value="NZ_CP169744.1"/>
</dbReference>
<dbReference type="SMR" id="Q88QL6"/>
<dbReference type="STRING" id="160488.PP_0473"/>
<dbReference type="PaxDb" id="160488-PP_0473"/>
<dbReference type="GeneID" id="83677771"/>
<dbReference type="KEGG" id="ppu:PP_0473"/>
<dbReference type="PATRIC" id="fig|160488.4.peg.505"/>
<dbReference type="eggNOG" id="COG0200">
    <property type="taxonomic scope" value="Bacteria"/>
</dbReference>
<dbReference type="HOGENOM" id="CLU_055188_4_2_6"/>
<dbReference type="OrthoDB" id="9810293at2"/>
<dbReference type="PhylomeDB" id="Q88QL6"/>
<dbReference type="BioCyc" id="PPUT160488:G1G01-519-MONOMER"/>
<dbReference type="Proteomes" id="UP000000556">
    <property type="component" value="Chromosome"/>
</dbReference>
<dbReference type="GO" id="GO:0022625">
    <property type="term" value="C:cytosolic large ribosomal subunit"/>
    <property type="evidence" value="ECO:0007669"/>
    <property type="project" value="TreeGrafter"/>
</dbReference>
<dbReference type="GO" id="GO:0019843">
    <property type="term" value="F:rRNA binding"/>
    <property type="evidence" value="ECO:0007669"/>
    <property type="project" value="UniProtKB-UniRule"/>
</dbReference>
<dbReference type="GO" id="GO:0003735">
    <property type="term" value="F:structural constituent of ribosome"/>
    <property type="evidence" value="ECO:0007669"/>
    <property type="project" value="InterPro"/>
</dbReference>
<dbReference type="GO" id="GO:0006412">
    <property type="term" value="P:translation"/>
    <property type="evidence" value="ECO:0007669"/>
    <property type="project" value="UniProtKB-UniRule"/>
</dbReference>
<dbReference type="FunFam" id="3.100.10.10:FF:000003">
    <property type="entry name" value="50S ribosomal protein L15"/>
    <property type="match status" value="1"/>
</dbReference>
<dbReference type="Gene3D" id="3.100.10.10">
    <property type="match status" value="1"/>
</dbReference>
<dbReference type="HAMAP" id="MF_01341">
    <property type="entry name" value="Ribosomal_uL15"/>
    <property type="match status" value="1"/>
</dbReference>
<dbReference type="InterPro" id="IPR030878">
    <property type="entry name" value="Ribosomal_uL15"/>
</dbReference>
<dbReference type="InterPro" id="IPR021131">
    <property type="entry name" value="Ribosomal_uL15/eL18"/>
</dbReference>
<dbReference type="InterPro" id="IPR036227">
    <property type="entry name" value="Ribosomal_uL15/eL18_sf"/>
</dbReference>
<dbReference type="InterPro" id="IPR005749">
    <property type="entry name" value="Ribosomal_uL15_bac-type"/>
</dbReference>
<dbReference type="InterPro" id="IPR001196">
    <property type="entry name" value="Ribosomal_uL15_CS"/>
</dbReference>
<dbReference type="NCBIfam" id="TIGR01071">
    <property type="entry name" value="rplO_bact"/>
    <property type="match status" value="1"/>
</dbReference>
<dbReference type="PANTHER" id="PTHR12934">
    <property type="entry name" value="50S RIBOSOMAL PROTEIN L15"/>
    <property type="match status" value="1"/>
</dbReference>
<dbReference type="PANTHER" id="PTHR12934:SF11">
    <property type="entry name" value="LARGE RIBOSOMAL SUBUNIT PROTEIN UL15M"/>
    <property type="match status" value="1"/>
</dbReference>
<dbReference type="Pfam" id="PF00828">
    <property type="entry name" value="Ribosomal_L27A"/>
    <property type="match status" value="1"/>
</dbReference>
<dbReference type="SUPFAM" id="SSF52080">
    <property type="entry name" value="Ribosomal proteins L15p and L18e"/>
    <property type="match status" value="1"/>
</dbReference>
<dbReference type="PROSITE" id="PS00475">
    <property type="entry name" value="RIBOSOMAL_L15"/>
    <property type="match status" value="1"/>
</dbReference>
<name>RL15_PSEPK</name>
<protein>
    <recommendedName>
        <fullName evidence="1">Large ribosomal subunit protein uL15</fullName>
    </recommendedName>
    <alternativeName>
        <fullName evidence="3">50S ribosomal protein L15</fullName>
    </alternativeName>
</protein>
<proteinExistence type="inferred from homology"/>
<keyword id="KW-1185">Reference proteome</keyword>
<keyword id="KW-0687">Ribonucleoprotein</keyword>
<keyword id="KW-0689">Ribosomal protein</keyword>
<keyword id="KW-0694">RNA-binding</keyword>
<keyword id="KW-0699">rRNA-binding</keyword>
<reference key="1">
    <citation type="journal article" date="2002" name="Environ. Microbiol.">
        <title>Complete genome sequence and comparative analysis of the metabolically versatile Pseudomonas putida KT2440.</title>
        <authorList>
            <person name="Nelson K.E."/>
            <person name="Weinel C."/>
            <person name="Paulsen I.T."/>
            <person name="Dodson R.J."/>
            <person name="Hilbert H."/>
            <person name="Martins dos Santos V.A.P."/>
            <person name="Fouts D.E."/>
            <person name="Gill S.R."/>
            <person name="Pop M."/>
            <person name="Holmes M."/>
            <person name="Brinkac L.M."/>
            <person name="Beanan M.J."/>
            <person name="DeBoy R.T."/>
            <person name="Daugherty S.C."/>
            <person name="Kolonay J.F."/>
            <person name="Madupu R."/>
            <person name="Nelson W.C."/>
            <person name="White O."/>
            <person name="Peterson J.D."/>
            <person name="Khouri H.M."/>
            <person name="Hance I."/>
            <person name="Chris Lee P."/>
            <person name="Holtzapple E.K."/>
            <person name="Scanlan D."/>
            <person name="Tran K."/>
            <person name="Moazzez A."/>
            <person name="Utterback T.R."/>
            <person name="Rizzo M."/>
            <person name="Lee K."/>
            <person name="Kosack D."/>
            <person name="Moestl D."/>
            <person name="Wedler H."/>
            <person name="Lauber J."/>
            <person name="Stjepandic D."/>
            <person name="Hoheisel J."/>
            <person name="Straetz M."/>
            <person name="Heim S."/>
            <person name="Kiewitz C."/>
            <person name="Eisen J.A."/>
            <person name="Timmis K.N."/>
            <person name="Duesterhoeft A."/>
            <person name="Tuemmler B."/>
            <person name="Fraser C.M."/>
        </authorList>
    </citation>
    <scope>NUCLEOTIDE SEQUENCE [LARGE SCALE GENOMIC DNA]</scope>
    <source>
        <strain>ATCC 47054 / DSM 6125 / CFBP 8728 / NCIMB 11950 / KT2440</strain>
    </source>
</reference>